<protein>
    <recommendedName>
        <fullName evidence="1">Argininosuccinate lyase</fullName>
        <shortName evidence="1">ASAL</shortName>
        <ecNumber evidence="1">4.3.2.1</ecNumber>
    </recommendedName>
    <alternativeName>
        <fullName evidence="1">Arginosuccinase</fullName>
    </alternativeName>
</protein>
<dbReference type="EC" id="4.3.2.1" evidence="1"/>
<dbReference type="EMBL" id="Y16584">
    <property type="protein sequence ID" value="CAA76302.1"/>
    <property type="molecule type" value="Genomic_DNA"/>
</dbReference>
<dbReference type="EMBL" id="BX950229">
    <property type="protein sequence ID" value="CAF29569.1"/>
    <property type="molecule type" value="Genomic_DNA"/>
</dbReference>
<dbReference type="RefSeq" id="WP_011169957.1">
    <property type="nucleotide sequence ID" value="NC_005791.1"/>
</dbReference>
<dbReference type="SMR" id="O74026"/>
<dbReference type="STRING" id="267377.MMP0013"/>
<dbReference type="EnsemblBacteria" id="CAF29569">
    <property type="protein sequence ID" value="CAF29569"/>
    <property type="gene ID" value="MMP0013"/>
</dbReference>
<dbReference type="GeneID" id="2761122"/>
<dbReference type="KEGG" id="mmp:MMP0013"/>
<dbReference type="PATRIC" id="fig|267377.15.peg.13"/>
<dbReference type="eggNOG" id="arCOG01748">
    <property type="taxonomic scope" value="Archaea"/>
</dbReference>
<dbReference type="HOGENOM" id="CLU_027272_2_3_2"/>
<dbReference type="OrthoDB" id="27337at2157"/>
<dbReference type="UniPathway" id="UPA00068">
    <property type="reaction ID" value="UER00114"/>
</dbReference>
<dbReference type="Proteomes" id="UP000000590">
    <property type="component" value="Chromosome"/>
</dbReference>
<dbReference type="GO" id="GO:0005829">
    <property type="term" value="C:cytosol"/>
    <property type="evidence" value="ECO:0007669"/>
    <property type="project" value="TreeGrafter"/>
</dbReference>
<dbReference type="GO" id="GO:0004056">
    <property type="term" value="F:argininosuccinate lyase activity"/>
    <property type="evidence" value="ECO:0007669"/>
    <property type="project" value="UniProtKB-UniRule"/>
</dbReference>
<dbReference type="GO" id="GO:0042450">
    <property type="term" value="P:arginine biosynthetic process via ornithine"/>
    <property type="evidence" value="ECO:0007669"/>
    <property type="project" value="InterPro"/>
</dbReference>
<dbReference type="GO" id="GO:0006526">
    <property type="term" value="P:L-arginine biosynthetic process"/>
    <property type="evidence" value="ECO:0007669"/>
    <property type="project" value="UniProtKB-UniRule"/>
</dbReference>
<dbReference type="CDD" id="cd01359">
    <property type="entry name" value="Argininosuccinate_lyase"/>
    <property type="match status" value="1"/>
</dbReference>
<dbReference type="FunFam" id="1.20.200.10:FF:000015">
    <property type="entry name" value="argininosuccinate lyase isoform X2"/>
    <property type="match status" value="1"/>
</dbReference>
<dbReference type="Gene3D" id="1.10.40.30">
    <property type="entry name" value="Fumarase/aspartase (C-terminal domain)"/>
    <property type="match status" value="1"/>
</dbReference>
<dbReference type="Gene3D" id="1.20.200.10">
    <property type="entry name" value="Fumarase/aspartase (Central domain)"/>
    <property type="match status" value="1"/>
</dbReference>
<dbReference type="Gene3D" id="1.10.275.10">
    <property type="entry name" value="Fumarase/aspartase (N-terminal domain)"/>
    <property type="match status" value="1"/>
</dbReference>
<dbReference type="HAMAP" id="MF_00006">
    <property type="entry name" value="Arg_succ_lyase"/>
    <property type="match status" value="1"/>
</dbReference>
<dbReference type="InterPro" id="IPR029419">
    <property type="entry name" value="Arg_succ_lyase_C"/>
</dbReference>
<dbReference type="InterPro" id="IPR009049">
    <property type="entry name" value="Argininosuccinate_lyase"/>
</dbReference>
<dbReference type="InterPro" id="IPR024083">
    <property type="entry name" value="Fumarase/histidase_N"/>
</dbReference>
<dbReference type="InterPro" id="IPR000362">
    <property type="entry name" value="Fumarate_lyase_fam"/>
</dbReference>
<dbReference type="InterPro" id="IPR022761">
    <property type="entry name" value="Fumarate_lyase_N"/>
</dbReference>
<dbReference type="InterPro" id="IPR008948">
    <property type="entry name" value="L-Aspartase-like"/>
</dbReference>
<dbReference type="NCBIfam" id="TIGR00838">
    <property type="entry name" value="argH"/>
    <property type="match status" value="1"/>
</dbReference>
<dbReference type="PANTHER" id="PTHR43814">
    <property type="entry name" value="ARGININOSUCCINATE LYASE"/>
    <property type="match status" value="1"/>
</dbReference>
<dbReference type="PANTHER" id="PTHR43814:SF1">
    <property type="entry name" value="ARGININOSUCCINATE LYASE"/>
    <property type="match status" value="1"/>
</dbReference>
<dbReference type="Pfam" id="PF14698">
    <property type="entry name" value="ASL_C2"/>
    <property type="match status" value="1"/>
</dbReference>
<dbReference type="Pfam" id="PF00206">
    <property type="entry name" value="Lyase_1"/>
    <property type="match status" value="1"/>
</dbReference>
<dbReference type="PRINTS" id="PR00145">
    <property type="entry name" value="ARGSUCLYASE"/>
</dbReference>
<dbReference type="PRINTS" id="PR00149">
    <property type="entry name" value="FUMRATELYASE"/>
</dbReference>
<dbReference type="SUPFAM" id="SSF48557">
    <property type="entry name" value="L-aspartase-like"/>
    <property type="match status" value="1"/>
</dbReference>
<comment type="catalytic activity">
    <reaction evidence="1">
        <text>2-(N(omega)-L-arginino)succinate = fumarate + L-arginine</text>
        <dbReference type="Rhea" id="RHEA:24020"/>
        <dbReference type="ChEBI" id="CHEBI:29806"/>
        <dbReference type="ChEBI" id="CHEBI:32682"/>
        <dbReference type="ChEBI" id="CHEBI:57472"/>
        <dbReference type="EC" id="4.3.2.1"/>
    </reaction>
</comment>
<comment type="pathway">
    <text evidence="1">Amino-acid biosynthesis; L-arginine biosynthesis; L-arginine from L-ornithine and carbamoyl phosphate: step 3/3.</text>
</comment>
<comment type="subcellular location">
    <subcellularLocation>
        <location evidence="1">Cytoplasm</location>
    </subcellularLocation>
</comment>
<comment type="similarity">
    <text evidence="1">Belongs to the lyase 1 family. Argininosuccinate lyase subfamily.</text>
</comment>
<keyword id="KW-0028">Amino-acid biosynthesis</keyword>
<keyword id="KW-0055">Arginine biosynthesis</keyword>
<keyword id="KW-0963">Cytoplasm</keyword>
<keyword id="KW-0456">Lyase</keyword>
<keyword id="KW-1185">Reference proteome</keyword>
<feature type="chain" id="PRO_0000137865" description="Argininosuccinate lyase">
    <location>
        <begin position="1"/>
        <end position="481"/>
    </location>
</feature>
<feature type="sequence conflict" description="In Ref. 1; CAA76302." evidence="2" ref="1">
    <original>N</original>
    <variation>I</variation>
    <location>
        <position position="73"/>
    </location>
</feature>
<feature type="sequence conflict" description="In Ref. 1; CAA76302." evidence="2" ref="1">
    <original>DL</original>
    <variation>IF</variation>
    <location>
        <begin position="75"/>
        <end position="76"/>
    </location>
</feature>
<gene>
    <name evidence="1" type="primary">argH</name>
    <name type="ordered locus">MMP0013</name>
</gene>
<name>ARLY_METMP</name>
<organism>
    <name type="scientific">Methanococcus maripaludis (strain DSM 14266 / JCM 13030 / NBRC 101832 / S2 / LL)</name>
    <dbReference type="NCBI Taxonomy" id="267377"/>
    <lineage>
        <taxon>Archaea</taxon>
        <taxon>Methanobacteriati</taxon>
        <taxon>Methanobacteriota</taxon>
        <taxon>Methanomada group</taxon>
        <taxon>Methanococci</taxon>
        <taxon>Methanococcales</taxon>
        <taxon>Methanococcaceae</taxon>
        <taxon>Methanococcus</taxon>
    </lineage>
</organism>
<evidence type="ECO:0000255" key="1">
    <source>
        <dbReference type="HAMAP-Rule" id="MF_00006"/>
    </source>
</evidence>
<evidence type="ECO:0000305" key="2"/>
<proteinExistence type="inferred from homology"/>
<accession>O74026</accession>
<reference key="1">
    <citation type="journal article" date="1999" name="FEMS Microbiol. Lett.">
        <title>Functional conservation between the argininosuccinate lyase of the archaeon Methanococcus maripaludis and the corresponding bacterial and eukaryal genes.</title>
        <authorList>
            <person name="Cohen-Kupiec R."/>
            <person name="Kupiec M."/>
            <person name="Sandbeck K."/>
            <person name="Leigh J.A."/>
        </authorList>
    </citation>
    <scope>NUCLEOTIDE SEQUENCE [GENOMIC DNA]</scope>
</reference>
<reference key="2">
    <citation type="journal article" date="2004" name="J. Bacteriol.">
        <title>Complete genome sequence of the genetically tractable hydrogenotrophic methanogen Methanococcus maripaludis.</title>
        <authorList>
            <person name="Hendrickson E.L."/>
            <person name="Kaul R."/>
            <person name="Zhou Y."/>
            <person name="Bovee D."/>
            <person name="Chapman P."/>
            <person name="Chung J."/>
            <person name="Conway de Macario E."/>
            <person name="Dodsworth J.A."/>
            <person name="Gillett W."/>
            <person name="Graham D.E."/>
            <person name="Hackett M."/>
            <person name="Haydock A.K."/>
            <person name="Kang A."/>
            <person name="Land M.L."/>
            <person name="Levy R."/>
            <person name="Lie T.J."/>
            <person name="Major T.A."/>
            <person name="Moore B.C."/>
            <person name="Porat I."/>
            <person name="Palmeiri A."/>
            <person name="Rouse G."/>
            <person name="Saenphimmachak C."/>
            <person name="Soell D."/>
            <person name="Van Dien S."/>
            <person name="Wang T."/>
            <person name="Whitman W.B."/>
            <person name="Xia Q."/>
            <person name="Zhang Y."/>
            <person name="Larimer F.W."/>
            <person name="Olson M.V."/>
            <person name="Leigh J.A."/>
        </authorList>
    </citation>
    <scope>NUCLEOTIDE SEQUENCE [LARGE SCALE GENOMIC DNA]</scope>
    <source>
        <strain>DSM 14266 / JCM 13030 / NBRC 101832 / S2 / LL</strain>
    </source>
</reference>
<sequence length="481" mass="54052">MNILRRGRLGSNVKEDVMKFTTSLEFDKEIFESDILCDIAHTTMLVEQNVISEENGKKIIAELKKIAKRGMENLDLDPSLDDIHMVIESELIKELGEDVAGRMHTGRSRNDEVATDLRLSLRKKVLEIIGHLITMEKNMLTVSDAHKETLTVGYTHLQQAQPVTFGHQILSHVSAIERDISRFFDTYNRINISPLGCGAMATTGFNLNRKRTKDLLGFYGIIENSMDGVSSRDFIVETMANISMLGTNLSKICEELVVFSSAEFNTIEIANEYTSTSSIMPQKKNPDVAEITRAKLSTLNGELVTVLTIMKALPNTYNRDLQEISPHLWKSVYTLIDSIQMVDGMISTVKVNKERMKENAEKNYSTATELADTLVRECGIAFRMAHGIVGELVKRSIEEKVEIKEIISEVLEKNNLSLSQEKIDTALDPFENVKLRNVIGGPAPEEVERAISSFNEKISAHKDKLDEKISEIKTAEKNLLE</sequence>